<feature type="chain" id="PRO_0000312686" description="Mitochondrial import receptor subunit TOM40B">
    <location>
        <begin position="1"/>
        <end position="308"/>
    </location>
</feature>
<feature type="region of interest" description="Disordered" evidence="4">
    <location>
        <begin position="1"/>
        <end position="29"/>
    </location>
</feature>
<feature type="region of interest" description="Required for mitochondrial targeting" evidence="1">
    <location>
        <begin position="281"/>
        <end position="308"/>
    </location>
</feature>
<name>TM40L_BOVIN</name>
<sequence>MGNTLGLAPMGALPRRSPRREEPLPNPGSFDELHRLCKDVFPAQMEGVKLVVNKVLSSHFQVAHTVHMSALGLPGYHLHAAYAGDWQLSPTEVFPTVVGDMDSGGSLNAQVLLLLAERLRAKAVFQTQQAKFLTWQFDGEYRGDDYTATLTLGNPDLIGESVIVVAHFLQSLTHRLVLGGELVYHRRPGEEGAILTLAGKYSAVHWVATLNVGSGGAHASYYHRANEQVQVGVEFEANTRLQDTTFSFGYHLTLPQANMVFRGLVDSNWCVGAVLEKKMPPLPVTLALGAFLNHWRNRFHCGFSITVG</sequence>
<dbReference type="EMBL" id="BT021733">
    <property type="protein sequence ID" value="AAX46580.1"/>
    <property type="status" value="ALT_FRAME"/>
    <property type="molecule type" value="mRNA"/>
</dbReference>
<dbReference type="EMBL" id="BC150081">
    <property type="protein sequence ID" value="AAI50082.1"/>
    <property type="molecule type" value="mRNA"/>
</dbReference>
<dbReference type="RefSeq" id="NP_001014853.2">
    <property type="nucleotide sequence ID" value="NM_001014853.2"/>
</dbReference>
<dbReference type="RefSeq" id="XP_005203529.1">
    <property type="nucleotide sequence ID" value="XM_005203472.3"/>
</dbReference>
<dbReference type="SMR" id="A6QR22"/>
<dbReference type="FunCoup" id="A6QR22">
    <property type="interactions" value="1979"/>
</dbReference>
<dbReference type="STRING" id="9913.ENSBTAP00000052024"/>
<dbReference type="PaxDb" id="9913-ENSBTAP00000012142"/>
<dbReference type="GeneID" id="505393"/>
<dbReference type="KEGG" id="bta:505393"/>
<dbReference type="CTD" id="84134"/>
<dbReference type="VEuPathDB" id="HostDB:ENSBTAG00000009213"/>
<dbReference type="eggNOG" id="KOG3296">
    <property type="taxonomic scope" value="Eukaryota"/>
</dbReference>
<dbReference type="HOGENOM" id="CLU_054399_0_0_1"/>
<dbReference type="InParanoid" id="A6QR22"/>
<dbReference type="OMA" id="WTEMGNT"/>
<dbReference type="OrthoDB" id="19656at2759"/>
<dbReference type="Proteomes" id="UP000009136">
    <property type="component" value="Chromosome 3"/>
</dbReference>
<dbReference type="Bgee" id="ENSBTAG00000009213">
    <property type="expression patterns" value="Expressed in retina and 105 other cell types or tissues"/>
</dbReference>
<dbReference type="GO" id="GO:0005742">
    <property type="term" value="C:mitochondrial outer membrane translocase complex"/>
    <property type="evidence" value="ECO:0000318"/>
    <property type="project" value="GO_Central"/>
</dbReference>
<dbReference type="GO" id="GO:0008320">
    <property type="term" value="F:protein transmembrane transporter activity"/>
    <property type="evidence" value="ECO:0000318"/>
    <property type="project" value="GO_Central"/>
</dbReference>
<dbReference type="GO" id="GO:0030150">
    <property type="term" value="P:protein import into mitochondrial matrix"/>
    <property type="evidence" value="ECO:0000318"/>
    <property type="project" value="GO_Central"/>
</dbReference>
<dbReference type="CDD" id="cd07305">
    <property type="entry name" value="Porin3_Tom40"/>
    <property type="match status" value="1"/>
</dbReference>
<dbReference type="FunFam" id="2.40.160.10:FF:000005">
    <property type="entry name" value="mitochondrial import receptor subunit TOM40 homolog"/>
    <property type="match status" value="1"/>
</dbReference>
<dbReference type="Gene3D" id="2.40.160.10">
    <property type="entry name" value="Porin"/>
    <property type="match status" value="1"/>
</dbReference>
<dbReference type="InterPro" id="IPR023614">
    <property type="entry name" value="Porin_dom_sf"/>
</dbReference>
<dbReference type="InterPro" id="IPR027246">
    <property type="entry name" value="Porin_Euk/Tom40"/>
</dbReference>
<dbReference type="InterPro" id="IPR037930">
    <property type="entry name" value="Tom40"/>
</dbReference>
<dbReference type="PANTHER" id="PTHR10802">
    <property type="entry name" value="MITOCHONDRIAL IMPORT RECEPTOR SUBUNIT TOM40"/>
    <property type="match status" value="1"/>
</dbReference>
<dbReference type="Pfam" id="PF01459">
    <property type="entry name" value="Porin_3"/>
    <property type="match status" value="1"/>
</dbReference>
<reference evidence="7" key="1">
    <citation type="journal article" date="2005" name="BMC Genomics">
        <title>Characterization of 954 bovine full-CDS cDNA sequences.</title>
        <authorList>
            <person name="Harhay G.P."/>
            <person name="Sonstegard T.S."/>
            <person name="Keele J.W."/>
            <person name="Heaton M.P."/>
            <person name="Clawson M.L."/>
            <person name="Snelling W.M."/>
            <person name="Wiedmann R.T."/>
            <person name="Van Tassell C.P."/>
            <person name="Smith T.P.L."/>
        </authorList>
    </citation>
    <scope>NUCLEOTIDE SEQUENCE [LARGE SCALE MRNA]</scope>
</reference>
<reference evidence="6" key="2">
    <citation type="submission" date="2007-07" db="EMBL/GenBank/DDBJ databases">
        <authorList>
            <consortium name="NIH - Mammalian Gene Collection (MGC) project"/>
        </authorList>
    </citation>
    <scope>NUCLEOTIDE SEQUENCE [LARGE SCALE MRNA]</scope>
    <source>
        <strain evidence="6">Hereford</strain>
        <tissue evidence="6">Thalamus</tissue>
    </source>
</reference>
<protein>
    <recommendedName>
        <fullName>Mitochondrial import receptor subunit TOM40B</fullName>
    </recommendedName>
    <alternativeName>
        <fullName>Protein TOMM40-like</fullName>
    </alternativeName>
</protein>
<gene>
    <name evidence="2" type="primary">TOMM40L</name>
</gene>
<accession>A6QR22</accession>
<accession>Q58D64</accession>
<keyword id="KW-0472">Membrane</keyword>
<keyword id="KW-0496">Mitochondrion</keyword>
<keyword id="KW-1000">Mitochondrion outer membrane</keyword>
<keyword id="KW-0653">Protein transport</keyword>
<keyword id="KW-1185">Reference proteome</keyword>
<keyword id="KW-0812">Transmembrane</keyword>
<keyword id="KW-1134">Transmembrane beta strand</keyword>
<keyword id="KW-0813">Transport</keyword>
<evidence type="ECO:0000250" key="1">
    <source>
        <dbReference type="UniProtKB" id="A4F267"/>
    </source>
</evidence>
<evidence type="ECO:0000250" key="2">
    <source>
        <dbReference type="UniProtKB" id="Q969M1"/>
    </source>
</evidence>
<evidence type="ECO:0000255" key="3"/>
<evidence type="ECO:0000256" key="4">
    <source>
        <dbReference type="SAM" id="MobiDB-lite"/>
    </source>
</evidence>
<evidence type="ECO:0000305" key="5"/>
<evidence type="ECO:0000312" key="6">
    <source>
        <dbReference type="EMBL" id="AAI50082.1"/>
    </source>
</evidence>
<evidence type="ECO:0000312" key="7">
    <source>
        <dbReference type="EMBL" id="AAX46580.1"/>
    </source>
</evidence>
<organism>
    <name type="scientific">Bos taurus</name>
    <name type="common">Bovine</name>
    <dbReference type="NCBI Taxonomy" id="9913"/>
    <lineage>
        <taxon>Eukaryota</taxon>
        <taxon>Metazoa</taxon>
        <taxon>Chordata</taxon>
        <taxon>Craniata</taxon>
        <taxon>Vertebrata</taxon>
        <taxon>Euteleostomi</taxon>
        <taxon>Mammalia</taxon>
        <taxon>Eutheria</taxon>
        <taxon>Laurasiatheria</taxon>
        <taxon>Artiodactyla</taxon>
        <taxon>Ruminantia</taxon>
        <taxon>Pecora</taxon>
        <taxon>Bovidae</taxon>
        <taxon>Bovinae</taxon>
        <taxon>Bos</taxon>
    </lineage>
</organism>
<comment type="function">
    <text evidence="1">Potential channel-forming protein implicated in import of protein precursors into mitochondria.</text>
</comment>
<comment type="subunit">
    <text evidence="1">Forms part of the preprotein translocase of the outer mitochondrial membrane (TOM complex) containing TOMM22, TOMM40, TOMM40L and TOMM70. Interacts with mitochondrial targeting sequences (By similarity).</text>
</comment>
<comment type="subcellular location">
    <subcellularLocation>
        <location evidence="1">Mitochondrion outer membrane</location>
        <topology evidence="1">Multi-pass membrane protein</topology>
    </subcellularLocation>
</comment>
<comment type="similarity">
    <text evidence="3">Belongs to the Tom40 family.</text>
</comment>
<comment type="sequence caution" evidence="5">
    <conflict type="frameshift">
        <sequence resource="EMBL-CDS" id="AAX46580"/>
    </conflict>
</comment>
<proteinExistence type="evidence at transcript level"/>